<keyword id="KW-0028">Amino-acid biosynthesis</keyword>
<keyword id="KW-0032">Aminotransferase</keyword>
<keyword id="KW-0963">Cytoplasm</keyword>
<keyword id="KW-0663">Pyridoxal phosphate</keyword>
<keyword id="KW-0664">Pyridoxine biosynthesis</keyword>
<keyword id="KW-0718">Serine biosynthesis</keyword>
<keyword id="KW-0808">Transferase</keyword>
<accession>B5QYQ7</accession>
<sequence>MAQVFNFSSGPAMLPAEVLKLAQQELRDWHGLGTSVMEISHRGKEFIQVAEEAEQDFRDLLNIPSNYKVLFCHGGGRGQFAGVPLNLLGDKTTADYVDAGYWAASAIKEAKKYCAPQIIDAKITVDGKRAVKPMREWQLSDNAAYLHYCPNETIDGIAIDETPDFGPEVVVTADFSSTILSAPLDVSRYGVIYAGAQKNIGPAGLTLVIVREDLLGKAHESCPSILDYTVLNDNDSMFNTPPTFAWYLSGLVFKWLKAQGGVAAMHKINQQKAELLYGVIDNSDFYRNDVAQANRSRMNVPFQLADNALDKVFLEESFAAGLHALKGHRVVGGMRASIYNAMPIEGVKALTDFMIDFERRHG</sequence>
<feature type="chain" id="PRO_1000203553" description="Phosphoserine aminotransferase">
    <location>
        <begin position="1"/>
        <end position="362"/>
    </location>
</feature>
<feature type="binding site" evidence="1">
    <location>
        <position position="9"/>
    </location>
    <ligand>
        <name>L-glutamate</name>
        <dbReference type="ChEBI" id="CHEBI:29985"/>
    </ligand>
</feature>
<feature type="binding site" evidence="1">
    <location>
        <position position="42"/>
    </location>
    <ligand>
        <name>L-glutamate</name>
        <dbReference type="ChEBI" id="CHEBI:29985"/>
    </ligand>
</feature>
<feature type="binding site" evidence="1">
    <location>
        <begin position="76"/>
        <end position="77"/>
    </location>
    <ligand>
        <name>pyridoxal 5'-phosphate</name>
        <dbReference type="ChEBI" id="CHEBI:597326"/>
    </ligand>
</feature>
<feature type="binding site" evidence="1">
    <location>
        <position position="102"/>
    </location>
    <ligand>
        <name>pyridoxal 5'-phosphate</name>
        <dbReference type="ChEBI" id="CHEBI:597326"/>
    </ligand>
</feature>
<feature type="binding site" evidence="1">
    <location>
        <position position="153"/>
    </location>
    <ligand>
        <name>pyridoxal 5'-phosphate</name>
        <dbReference type="ChEBI" id="CHEBI:597326"/>
    </ligand>
</feature>
<feature type="binding site" evidence="1">
    <location>
        <position position="174"/>
    </location>
    <ligand>
        <name>pyridoxal 5'-phosphate</name>
        <dbReference type="ChEBI" id="CHEBI:597326"/>
    </ligand>
</feature>
<feature type="binding site" evidence="1">
    <location>
        <position position="197"/>
    </location>
    <ligand>
        <name>pyridoxal 5'-phosphate</name>
        <dbReference type="ChEBI" id="CHEBI:597326"/>
    </ligand>
</feature>
<feature type="binding site" evidence="1">
    <location>
        <begin position="239"/>
        <end position="240"/>
    </location>
    <ligand>
        <name>pyridoxal 5'-phosphate</name>
        <dbReference type="ChEBI" id="CHEBI:597326"/>
    </ligand>
</feature>
<feature type="modified residue" description="N6-(pyridoxal phosphate)lysine" evidence="1">
    <location>
        <position position="198"/>
    </location>
</feature>
<reference key="1">
    <citation type="journal article" date="2008" name="Genome Res.">
        <title>Comparative genome analysis of Salmonella enteritidis PT4 and Salmonella gallinarum 287/91 provides insights into evolutionary and host adaptation pathways.</title>
        <authorList>
            <person name="Thomson N.R."/>
            <person name="Clayton D.J."/>
            <person name="Windhorst D."/>
            <person name="Vernikos G."/>
            <person name="Davidson S."/>
            <person name="Churcher C."/>
            <person name="Quail M.A."/>
            <person name="Stevens M."/>
            <person name="Jones M.A."/>
            <person name="Watson M."/>
            <person name="Barron A."/>
            <person name="Layton A."/>
            <person name="Pickard D."/>
            <person name="Kingsley R.A."/>
            <person name="Bignell A."/>
            <person name="Clark L."/>
            <person name="Harris B."/>
            <person name="Ormond D."/>
            <person name="Abdellah Z."/>
            <person name="Brooks K."/>
            <person name="Cherevach I."/>
            <person name="Chillingworth T."/>
            <person name="Woodward J."/>
            <person name="Norberczak H."/>
            <person name="Lord A."/>
            <person name="Arrowsmith C."/>
            <person name="Jagels K."/>
            <person name="Moule S."/>
            <person name="Mungall K."/>
            <person name="Saunders M."/>
            <person name="Whitehead S."/>
            <person name="Chabalgoity J.A."/>
            <person name="Maskell D."/>
            <person name="Humphreys T."/>
            <person name="Roberts M."/>
            <person name="Barrow P.A."/>
            <person name="Dougan G."/>
            <person name="Parkhill J."/>
        </authorList>
    </citation>
    <scope>NUCLEOTIDE SEQUENCE [LARGE SCALE GENOMIC DNA]</scope>
    <source>
        <strain>P125109</strain>
    </source>
</reference>
<proteinExistence type="inferred from homology"/>
<gene>
    <name evidence="1" type="primary">serC</name>
    <name type="ordered locus">SEN0881</name>
</gene>
<dbReference type="EC" id="2.6.1.52" evidence="1"/>
<dbReference type="EMBL" id="AM933172">
    <property type="protein sequence ID" value="CAR32464.1"/>
    <property type="molecule type" value="Genomic_DNA"/>
</dbReference>
<dbReference type="RefSeq" id="WP_000079590.1">
    <property type="nucleotide sequence ID" value="NC_011294.1"/>
</dbReference>
<dbReference type="SMR" id="B5QYQ7"/>
<dbReference type="KEGG" id="set:SEN0881"/>
<dbReference type="HOGENOM" id="CLU_034866_0_2_6"/>
<dbReference type="UniPathway" id="UPA00135">
    <property type="reaction ID" value="UER00197"/>
</dbReference>
<dbReference type="UniPathway" id="UPA00244">
    <property type="reaction ID" value="UER00311"/>
</dbReference>
<dbReference type="Proteomes" id="UP000000613">
    <property type="component" value="Chromosome"/>
</dbReference>
<dbReference type="GO" id="GO:0005737">
    <property type="term" value="C:cytoplasm"/>
    <property type="evidence" value="ECO:0007669"/>
    <property type="project" value="UniProtKB-SubCell"/>
</dbReference>
<dbReference type="GO" id="GO:0004648">
    <property type="term" value="F:O-phospho-L-serine:2-oxoglutarate aminotransferase activity"/>
    <property type="evidence" value="ECO:0007669"/>
    <property type="project" value="UniProtKB-UniRule"/>
</dbReference>
<dbReference type="GO" id="GO:0030170">
    <property type="term" value="F:pyridoxal phosphate binding"/>
    <property type="evidence" value="ECO:0007669"/>
    <property type="project" value="UniProtKB-UniRule"/>
</dbReference>
<dbReference type="GO" id="GO:0006564">
    <property type="term" value="P:L-serine biosynthetic process"/>
    <property type="evidence" value="ECO:0007669"/>
    <property type="project" value="UniProtKB-UniRule"/>
</dbReference>
<dbReference type="GO" id="GO:0008615">
    <property type="term" value="P:pyridoxine biosynthetic process"/>
    <property type="evidence" value="ECO:0007669"/>
    <property type="project" value="UniProtKB-UniRule"/>
</dbReference>
<dbReference type="CDD" id="cd00611">
    <property type="entry name" value="PSAT_like"/>
    <property type="match status" value="1"/>
</dbReference>
<dbReference type="FunFam" id="3.40.640.10:FF:000010">
    <property type="entry name" value="Phosphoserine aminotransferase"/>
    <property type="match status" value="1"/>
</dbReference>
<dbReference type="FunFam" id="3.90.1150.10:FF:000006">
    <property type="entry name" value="Phosphoserine aminotransferase"/>
    <property type="match status" value="1"/>
</dbReference>
<dbReference type="Gene3D" id="3.90.1150.10">
    <property type="entry name" value="Aspartate Aminotransferase, domain 1"/>
    <property type="match status" value="1"/>
</dbReference>
<dbReference type="Gene3D" id="3.40.640.10">
    <property type="entry name" value="Type I PLP-dependent aspartate aminotransferase-like (Major domain)"/>
    <property type="match status" value="1"/>
</dbReference>
<dbReference type="HAMAP" id="MF_00160">
    <property type="entry name" value="SerC_aminotrans_5"/>
    <property type="match status" value="1"/>
</dbReference>
<dbReference type="InterPro" id="IPR000192">
    <property type="entry name" value="Aminotrans_V_dom"/>
</dbReference>
<dbReference type="InterPro" id="IPR020578">
    <property type="entry name" value="Aminotrans_V_PyrdxlP_BS"/>
</dbReference>
<dbReference type="InterPro" id="IPR022278">
    <property type="entry name" value="Pser_aminoTfrase"/>
</dbReference>
<dbReference type="InterPro" id="IPR015424">
    <property type="entry name" value="PyrdxlP-dep_Trfase"/>
</dbReference>
<dbReference type="InterPro" id="IPR015421">
    <property type="entry name" value="PyrdxlP-dep_Trfase_major"/>
</dbReference>
<dbReference type="InterPro" id="IPR015422">
    <property type="entry name" value="PyrdxlP-dep_Trfase_small"/>
</dbReference>
<dbReference type="NCBIfam" id="NF003764">
    <property type="entry name" value="PRK05355.1"/>
    <property type="match status" value="1"/>
</dbReference>
<dbReference type="NCBIfam" id="TIGR01364">
    <property type="entry name" value="serC_1"/>
    <property type="match status" value="1"/>
</dbReference>
<dbReference type="PANTHER" id="PTHR43247">
    <property type="entry name" value="PHOSPHOSERINE AMINOTRANSFERASE"/>
    <property type="match status" value="1"/>
</dbReference>
<dbReference type="PANTHER" id="PTHR43247:SF1">
    <property type="entry name" value="PHOSPHOSERINE AMINOTRANSFERASE"/>
    <property type="match status" value="1"/>
</dbReference>
<dbReference type="Pfam" id="PF00266">
    <property type="entry name" value="Aminotran_5"/>
    <property type="match status" value="1"/>
</dbReference>
<dbReference type="PIRSF" id="PIRSF000525">
    <property type="entry name" value="SerC"/>
    <property type="match status" value="1"/>
</dbReference>
<dbReference type="SUPFAM" id="SSF53383">
    <property type="entry name" value="PLP-dependent transferases"/>
    <property type="match status" value="1"/>
</dbReference>
<dbReference type="PROSITE" id="PS00595">
    <property type="entry name" value="AA_TRANSFER_CLASS_5"/>
    <property type="match status" value="1"/>
</dbReference>
<organism>
    <name type="scientific">Salmonella enteritidis PT4 (strain P125109)</name>
    <dbReference type="NCBI Taxonomy" id="550537"/>
    <lineage>
        <taxon>Bacteria</taxon>
        <taxon>Pseudomonadati</taxon>
        <taxon>Pseudomonadota</taxon>
        <taxon>Gammaproteobacteria</taxon>
        <taxon>Enterobacterales</taxon>
        <taxon>Enterobacteriaceae</taxon>
        <taxon>Salmonella</taxon>
    </lineage>
</organism>
<protein>
    <recommendedName>
        <fullName evidence="1">Phosphoserine aminotransferase</fullName>
        <ecNumber evidence="1">2.6.1.52</ecNumber>
    </recommendedName>
    <alternativeName>
        <fullName evidence="1">Phosphohydroxythreonine aminotransferase</fullName>
        <shortName evidence="1">PSAT</shortName>
    </alternativeName>
</protein>
<evidence type="ECO:0000255" key="1">
    <source>
        <dbReference type="HAMAP-Rule" id="MF_00160"/>
    </source>
</evidence>
<comment type="function">
    <text evidence="1">Catalyzes the reversible conversion of 3-phosphohydroxypyruvate to phosphoserine and of 3-hydroxy-2-oxo-4-phosphonooxybutanoate to phosphohydroxythreonine.</text>
</comment>
<comment type="catalytic activity">
    <reaction evidence="1">
        <text>O-phospho-L-serine + 2-oxoglutarate = 3-phosphooxypyruvate + L-glutamate</text>
        <dbReference type="Rhea" id="RHEA:14329"/>
        <dbReference type="ChEBI" id="CHEBI:16810"/>
        <dbReference type="ChEBI" id="CHEBI:18110"/>
        <dbReference type="ChEBI" id="CHEBI:29985"/>
        <dbReference type="ChEBI" id="CHEBI:57524"/>
        <dbReference type="EC" id="2.6.1.52"/>
    </reaction>
</comment>
<comment type="catalytic activity">
    <reaction evidence="1">
        <text>4-(phosphooxy)-L-threonine + 2-oxoglutarate = (R)-3-hydroxy-2-oxo-4-phosphooxybutanoate + L-glutamate</text>
        <dbReference type="Rhea" id="RHEA:16573"/>
        <dbReference type="ChEBI" id="CHEBI:16810"/>
        <dbReference type="ChEBI" id="CHEBI:29985"/>
        <dbReference type="ChEBI" id="CHEBI:58452"/>
        <dbReference type="ChEBI" id="CHEBI:58538"/>
        <dbReference type="EC" id="2.6.1.52"/>
    </reaction>
</comment>
<comment type="cofactor">
    <cofactor evidence="1">
        <name>pyridoxal 5'-phosphate</name>
        <dbReference type="ChEBI" id="CHEBI:597326"/>
    </cofactor>
    <text evidence="1">Binds 1 pyridoxal phosphate per subunit.</text>
</comment>
<comment type="pathway">
    <text evidence="1">Amino-acid biosynthesis; L-serine biosynthesis; L-serine from 3-phospho-D-glycerate: step 2/3.</text>
</comment>
<comment type="pathway">
    <text evidence="1">Cofactor biosynthesis; pyridoxine 5'-phosphate biosynthesis; pyridoxine 5'-phosphate from D-erythrose 4-phosphate: step 3/5.</text>
</comment>
<comment type="subunit">
    <text evidence="1">Homodimer.</text>
</comment>
<comment type="subcellular location">
    <subcellularLocation>
        <location evidence="1">Cytoplasm</location>
    </subcellularLocation>
</comment>
<comment type="similarity">
    <text evidence="1">Belongs to the class-V pyridoxal-phosphate-dependent aminotransferase family. SerC subfamily.</text>
</comment>
<name>SERC_SALEP</name>